<accession>P51525</accession>
<feature type="signal peptide" evidence="2">
    <location>
        <begin position="1"/>
        <end position="29"/>
    </location>
</feature>
<feature type="propeptide" id="PRO_0000004741" evidence="2">
    <location>
        <begin position="30"/>
        <end position="146"/>
    </location>
</feature>
<feature type="peptide" id="PRO_0000004742" description="Prophenin-2">
    <location>
        <begin position="147"/>
        <end position="225"/>
    </location>
</feature>
<feature type="propeptide" id="PRO_0000004743" description="Removed in mature form" evidence="2">
    <location>
        <begin position="226"/>
        <end position="228"/>
    </location>
</feature>
<feature type="repeat" description="1">
    <location>
        <begin position="148"/>
        <end position="157"/>
    </location>
</feature>
<feature type="repeat" description="2">
    <location>
        <begin position="158"/>
        <end position="167"/>
    </location>
</feature>
<feature type="repeat" description="3">
    <location>
        <begin position="168"/>
        <end position="177"/>
    </location>
</feature>
<feature type="repeat" description="4">
    <location>
        <begin position="178"/>
        <end position="187"/>
    </location>
</feature>
<feature type="repeat" description="5">
    <location>
        <begin position="188"/>
        <end position="197"/>
    </location>
</feature>
<feature type="repeat" description="6">
    <location>
        <begin position="198"/>
        <end position="207"/>
    </location>
</feature>
<feature type="repeat" description="7">
    <location>
        <begin position="208"/>
        <end position="217"/>
    </location>
</feature>
<feature type="region of interest" description="7 X 10 AA tandem repeats">
    <location>
        <begin position="148"/>
        <end position="217"/>
    </location>
</feature>
<feature type="region of interest" description="Disordered" evidence="3">
    <location>
        <begin position="167"/>
        <end position="195"/>
    </location>
</feature>
<feature type="region of interest" description="Disordered" evidence="3">
    <location>
        <begin position="207"/>
        <end position="228"/>
    </location>
</feature>
<feature type="modified residue" description="Proline amide" evidence="2">
    <location>
        <position position="225"/>
    </location>
</feature>
<feature type="disulfide bond" evidence="1">
    <location>
        <begin position="85"/>
        <end position="96"/>
    </location>
</feature>
<feature type="disulfide bond" evidence="1">
    <location>
        <begin position="107"/>
        <end position="124"/>
    </location>
</feature>
<reference key="1">
    <citation type="journal article" date="1993" name="FEBS Lett.">
        <title>Molecular cloning of a putative homolog of proline/arginine-rich antibacterial peptides from porcine bone marrow.</title>
        <authorList>
            <person name="Pungercar J."/>
            <person name="Strukelj B."/>
            <person name="Kopitar G."/>
            <person name="Renko M."/>
            <person name="Lenarcic B."/>
            <person name="Gubensek F."/>
            <person name="Turk V."/>
        </authorList>
    </citation>
    <scope>NUCLEOTIDE SEQUENCE [MRNA]</scope>
    <source>
        <tissue>Bone marrow</tissue>
    </source>
</reference>
<reference key="2">
    <citation type="journal article" date="1995" name="FEBS Lett.">
        <title>Structures of genes for two cathelin-associated antimicrobial peptides: prophenin-2 and PR-39.</title>
        <authorList>
            <person name="Zhao C."/>
            <person name="Ganz T."/>
            <person name="Lehrer R.I."/>
        </authorList>
    </citation>
    <scope>NUCLEOTIDE SEQUENCE [GENOMIC DNA]</scope>
    <source>
        <tissue>Liver</tissue>
    </source>
</reference>
<sequence length="228" mass="25855">METQRASLCLGRWSLWLLLLALVVPSASAQALSYREAVLRAVDRLNEQSSEANLYRLLELDQPPKADEDPGTPKPVSFTVKETVCPRPTRRPPELCDFKENGRVKQCVGTVTLDQIKDPLDITCNEGVRRFPWWWPFLRRPRLRRQAFPPPNVPGPRFPPPNVPGPRFPPPNFPGPRFPPPNFPGPRFPPPNFPGPPFPPPIFPGPWFPPPPPFRPPPFGPPRFPGRR</sequence>
<dbReference type="EMBL" id="X75438">
    <property type="protein sequence ID" value="CAA53188.1"/>
    <property type="molecule type" value="mRNA"/>
</dbReference>
<dbReference type="EMBL" id="X89202">
    <property type="protein sequence ID" value="CAA61488.1"/>
    <property type="molecule type" value="Genomic_DNA"/>
</dbReference>
<dbReference type="PIR" id="S40463">
    <property type="entry name" value="S40463"/>
</dbReference>
<dbReference type="RefSeq" id="NP_999028.1">
    <property type="nucleotide sequence ID" value="NM_213863.1"/>
</dbReference>
<dbReference type="SMR" id="P51525"/>
<dbReference type="FunCoup" id="P51525">
    <property type="interactions" value="103"/>
</dbReference>
<dbReference type="STRING" id="9823.ENSSSCP00000042895"/>
<dbReference type="TCDB" id="1.C.33.1.1">
    <property type="family name" value="the cathelicidin (cathelicidin) family"/>
</dbReference>
<dbReference type="PaxDb" id="9823-ENSSSCP00000021393"/>
<dbReference type="PeptideAtlas" id="P51525"/>
<dbReference type="GeneID" id="396871"/>
<dbReference type="KEGG" id="ssc:396871"/>
<dbReference type="CTD" id="396871"/>
<dbReference type="InParanoid" id="P51525"/>
<dbReference type="OrthoDB" id="9930485at2759"/>
<dbReference type="Proteomes" id="UP000008227">
    <property type="component" value="Unplaced"/>
</dbReference>
<dbReference type="Proteomes" id="UP000314985">
    <property type="component" value="Unplaced"/>
</dbReference>
<dbReference type="Proteomes" id="UP000694570">
    <property type="component" value="Unplaced"/>
</dbReference>
<dbReference type="Proteomes" id="UP000694571">
    <property type="component" value="Unplaced"/>
</dbReference>
<dbReference type="Proteomes" id="UP000694720">
    <property type="component" value="Unplaced"/>
</dbReference>
<dbReference type="Proteomes" id="UP000694722">
    <property type="component" value="Unplaced"/>
</dbReference>
<dbReference type="Proteomes" id="UP000694723">
    <property type="component" value="Unplaced"/>
</dbReference>
<dbReference type="Proteomes" id="UP000694724">
    <property type="component" value="Unplaced"/>
</dbReference>
<dbReference type="Proteomes" id="UP000694725">
    <property type="component" value="Unplaced"/>
</dbReference>
<dbReference type="Proteomes" id="UP000694726">
    <property type="component" value="Unplaced"/>
</dbReference>
<dbReference type="Proteomes" id="UP000694727">
    <property type="component" value="Unplaced"/>
</dbReference>
<dbReference type="Proteomes" id="UP000694728">
    <property type="component" value="Unplaced"/>
</dbReference>
<dbReference type="GO" id="GO:0005615">
    <property type="term" value="C:extracellular space"/>
    <property type="evidence" value="ECO:0000318"/>
    <property type="project" value="GO_Central"/>
</dbReference>
<dbReference type="GO" id="GO:0001530">
    <property type="term" value="F:lipopolysaccharide binding"/>
    <property type="evidence" value="ECO:0000318"/>
    <property type="project" value="GO_Central"/>
</dbReference>
<dbReference type="GO" id="GO:0061844">
    <property type="term" value="P:antimicrobial humoral immune response mediated by antimicrobial peptide"/>
    <property type="evidence" value="ECO:0000318"/>
    <property type="project" value="GO_Central"/>
</dbReference>
<dbReference type="GO" id="GO:0050829">
    <property type="term" value="P:defense response to Gram-negative bacterium"/>
    <property type="evidence" value="ECO:0000318"/>
    <property type="project" value="GO_Central"/>
</dbReference>
<dbReference type="GO" id="GO:0050830">
    <property type="term" value="P:defense response to Gram-positive bacterium"/>
    <property type="evidence" value="ECO:0000318"/>
    <property type="project" value="GO_Central"/>
</dbReference>
<dbReference type="GO" id="GO:0045087">
    <property type="term" value="P:innate immune response"/>
    <property type="evidence" value="ECO:0000318"/>
    <property type="project" value="GO_Central"/>
</dbReference>
<dbReference type="FunFam" id="3.10.450.10:FF:000003">
    <property type="entry name" value="Cathelicidin antimicrobial peptide"/>
    <property type="match status" value="1"/>
</dbReference>
<dbReference type="Gene3D" id="3.10.450.10">
    <property type="match status" value="1"/>
</dbReference>
<dbReference type="InterPro" id="IPR001894">
    <property type="entry name" value="Cathelicidin-like"/>
</dbReference>
<dbReference type="InterPro" id="IPR018216">
    <property type="entry name" value="Cathelicidin_CS"/>
</dbReference>
<dbReference type="InterPro" id="IPR046350">
    <property type="entry name" value="Cystatin_sf"/>
</dbReference>
<dbReference type="PANTHER" id="PTHR10206">
    <property type="entry name" value="CATHELICIDIN"/>
    <property type="match status" value="1"/>
</dbReference>
<dbReference type="PANTHER" id="PTHR10206:SF2">
    <property type="entry name" value="CATHELICIDIN ANTIMICROBIAL PEPTIDE"/>
    <property type="match status" value="1"/>
</dbReference>
<dbReference type="Pfam" id="PF00666">
    <property type="entry name" value="Cathelicidins"/>
    <property type="match status" value="1"/>
</dbReference>
<dbReference type="PRINTS" id="PR01217">
    <property type="entry name" value="PRICHEXTENSN"/>
</dbReference>
<dbReference type="SUPFAM" id="SSF54403">
    <property type="entry name" value="Cystatin/monellin"/>
    <property type="match status" value="1"/>
</dbReference>
<dbReference type="PROSITE" id="PS00946">
    <property type="entry name" value="CATHELICIDINS_1"/>
    <property type="match status" value="1"/>
</dbReference>
<dbReference type="PROSITE" id="PS00947">
    <property type="entry name" value="CATHELICIDINS_2"/>
    <property type="match status" value="1"/>
</dbReference>
<name>PF12_PIG</name>
<protein>
    <recommendedName>
        <fullName>Prophenin-2</fullName>
    </recommendedName>
    <alternativeName>
        <fullName>C12</fullName>
    </alternativeName>
    <alternativeName>
        <fullName>PF-2</fullName>
    </alternativeName>
    <alternativeName>
        <fullName>PR-2</fullName>
    </alternativeName>
    <alternativeName>
        <fullName>Prophenin-1-like</fullName>
    </alternativeName>
</protein>
<proteinExistence type="evidence at transcript level"/>
<evidence type="ECO:0000250" key="1"/>
<evidence type="ECO:0000255" key="2"/>
<evidence type="ECO:0000256" key="3">
    <source>
        <dbReference type="SAM" id="MobiDB-lite"/>
    </source>
</evidence>
<evidence type="ECO:0000305" key="4"/>
<keyword id="KW-0027">Amidation</keyword>
<keyword id="KW-0044">Antibiotic</keyword>
<keyword id="KW-0929">Antimicrobial</keyword>
<keyword id="KW-1015">Disulfide bond</keyword>
<keyword id="KW-1185">Reference proteome</keyword>
<keyword id="KW-0677">Repeat</keyword>
<keyword id="KW-0964">Secreted</keyword>
<keyword id="KW-0732">Signal</keyword>
<organism>
    <name type="scientific">Sus scrofa</name>
    <name type="common">Pig</name>
    <dbReference type="NCBI Taxonomy" id="9823"/>
    <lineage>
        <taxon>Eukaryota</taxon>
        <taxon>Metazoa</taxon>
        <taxon>Chordata</taxon>
        <taxon>Craniata</taxon>
        <taxon>Vertebrata</taxon>
        <taxon>Euteleostomi</taxon>
        <taxon>Mammalia</taxon>
        <taxon>Eutheria</taxon>
        <taxon>Laurasiatheria</taxon>
        <taxon>Artiodactyla</taxon>
        <taxon>Suina</taxon>
        <taxon>Suidae</taxon>
        <taxon>Sus</taxon>
    </lineage>
</organism>
<comment type="function">
    <text>Exerts antimicrobial activity. It is more effective against Gram-negative bacteria than Gram-positive bacteria.</text>
</comment>
<comment type="subcellular location">
    <subcellularLocation>
        <location>Secreted</location>
    </subcellularLocation>
</comment>
<comment type="similarity">
    <text evidence="4">Belongs to the cathelicidin family.</text>
</comment>